<sequence length="142" mass="16033">MKTFTAKPETVKRDWYVVDANGKTLGRLATELARRLRGKHKAEYTPHVDTGDYIIVLNADKVAVTGNKRTDKIYYHHTGHIGGIKQATFEEMIARRPERVIEIAVKGMLPKGPLGRAMFRKLKVYAGTEHNHAAQQPQVLDI</sequence>
<evidence type="ECO:0000255" key="1">
    <source>
        <dbReference type="HAMAP-Rule" id="MF_01366"/>
    </source>
</evidence>
<evidence type="ECO:0000305" key="2"/>
<accession>Q6DAE7</accession>
<feature type="chain" id="PRO_0000261723" description="Large ribosomal subunit protein uL13">
    <location>
        <begin position="1"/>
        <end position="142"/>
    </location>
</feature>
<name>RL13_PECAS</name>
<protein>
    <recommendedName>
        <fullName evidence="1">Large ribosomal subunit protein uL13</fullName>
    </recommendedName>
    <alternativeName>
        <fullName evidence="2">50S ribosomal protein L13</fullName>
    </alternativeName>
</protein>
<comment type="function">
    <text evidence="1">This protein is one of the early assembly proteins of the 50S ribosomal subunit, although it is not seen to bind rRNA by itself. It is important during the early stages of 50S assembly.</text>
</comment>
<comment type="subunit">
    <text evidence="1">Part of the 50S ribosomal subunit.</text>
</comment>
<comment type="similarity">
    <text evidence="1">Belongs to the universal ribosomal protein uL13 family.</text>
</comment>
<gene>
    <name evidence="1" type="primary">rplM</name>
    <name type="ordered locus">ECA0306</name>
</gene>
<proteinExistence type="inferred from homology"/>
<dbReference type="EMBL" id="BX950851">
    <property type="protein sequence ID" value="CAG73226.1"/>
    <property type="molecule type" value="Genomic_DNA"/>
</dbReference>
<dbReference type="RefSeq" id="WP_005975488.1">
    <property type="nucleotide sequence ID" value="NC_004547.2"/>
</dbReference>
<dbReference type="SMR" id="Q6DAE7"/>
<dbReference type="STRING" id="218491.ECA0306"/>
<dbReference type="GeneID" id="93388381"/>
<dbReference type="KEGG" id="eca:ECA0306"/>
<dbReference type="eggNOG" id="COG0102">
    <property type="taxonomic scope" value="Bacteria"/>
</dbReference>
<dbReference type="HOGENOM" id="CLU_082184_2_2_6"/>
<dbReference type="OrthoDB" id="9801330at2"/>
<dbReference type="Proteomes" id="UP000007966">
    <property type="component" value="Chromosome"/>
</dbReference>
<dbReference type="GO" id="GO:0022625">
    <property type="term" value="C:cytosolic large ribosomal subunit"/>
    <property type="evidence" value="ECO:0007669"/>
    <property type="project" value="TreeGrafter"/>
</dbReference>
<dbReference type="GO" id="GO:0003729">
    <property type="term" value="F:mRNA binding"/>
    <property type="evidence" value="ECO:0007669"/>
    <property type="project" value="TreeGrafter"/>
</dbReference>
<dbReference type="GO" id="GO:0003735">
    <property type="term" value="F:structural constituent of ribosome"/>
    <property type="evidence" value="ECO:0007669"/>
    <property type="project" value="InterPro"/>
</dbReference>
<dbReference type="GO" id="GO:0017148">
    <property type="term" value="P:negative regulation of translation"/>
    <property type="evidence" value="ECO:0007669"/>
    <property type="project" value="TreeGrafter"/>
</dbReference>
<dbReference type="GO" id="GO:0006412">
    <property type="term" value="P:translation"/>
    <property type="evidence" value="ECO:0007669"/>
    <property type="project" value="UniProtKB-UniRule"/>
</dbReference>
<dbReference type="CDD" id="cd00392">
    <property type="entry name" value="Ribosomal_L13"/>
    <property type="match status" value="1"/>
</dbReference>
<dbReference type="FunFam" id="3.90.1180.10:FF:000001">
    <property type="entry name" value="50S ribosomal protein L13"/>
    <property type="match status" value="1"/>
</dbReference>
<dbReference type="Gene3D" id="3.90.1180.10">
    <property type="entry name" value="Ribosomal protein L13"/>
    <property type="match status" value="1"/>
</dbReference>
<dbReference type="HAMAP" id="MF_01366">
    <property type="entry name" value="Ribosomal_uL13"/>
    <property type="match status" value="1"/>
</dbReference>
<dbReference type="InterPro" id="IPR005822">
    <property type="entry name" value="Ribosomal_uL13"/>
</dbReference>
<dbReference type="InterPro" id="IPR005823">
    <property type="entry name" value="Ribosomal_uL13_bac-type"/>
</dbReference>
<dbReference type="InterPro" id="IPR023563">
    <property type="entry name" value="Ribosomal_uL13_CS"/>
</dbReference>
<dbReference type="InterPro" id="IPR036899">
    <property type="entry name" value="Ribosomal_uL13_sf"/>
</dbReference>
<dbReference type="NCBIfam" id="TIGR01066">
    <property type="entry name" value="rplM_bact"/>
    <property type="match status" value="1"/>
</dbReference>
<dbReference type="PANTHER" id="PTHR11545:SF2">
    <property type="entry name" value="LARGE RIBOSOMAL SUBUNIT PROTEIN UL13M"/>
    <property type="match status" value="1"/>
</dbReference>
<dbReference type="PANTHER" id="PTHR11545">
    <property type="entry name" value="RIBOSOMAL PROTEIN L13"/>
    <property type="match status" value="1"/>
</dbReference>
<dbReference type="Pfam" id="PF00572">
    <property type="entry name" value="Ribosomal_L13"/>
    <property type="match status" value="1"/>
</dbReference>
<dbReference type="PIRSF" id="PIRSF002181">
    <property type="entry name" value="Ribosomal_L13"/>
    <property type="match status" value="1"/>
</dbReference>
<dbReference type="SUPFAM" id="SSF52161">
    <property type="entry name" value="Ribosomal protein L13"/>
    <property type="match status" value="1"/>
</dbReference>
<dbReference type="PROSITE" id="PS00783">
    <property type="entry name" value="RIBOSOMAL_L13"/>
    <property type="match status" value="1"/>
</dbReference>
<keyword id="KW-1185">Reference proteome</keyword>
<keyword id="KW-0687">Ribonucleoprotein</keyword>
<keyword id="KW-0689">Ribosomal protein</keyword>
<reference key="1">
    <citation type="journal article" date="2004" name="Proc. Natl. Acad. Sci. U.S.A.">
        <title>Genome sequence of the enterobacterial phytopathogen Erwinia carotovora subsp. atroseptica and characterization of virulence factors.</title>
        <authorList>
            <person name="Bell K.S."/>
            <person name="Sebaihia M."/>
            <person name="Pritchard L."/>
            <person name="Holden M.T.G."/>
            <person name="Hyman L.J."/>
            <person name="Holeva M.C."/>
            <person name="Thomson N.R."/>
            <person name="Bentley S.D."/>
            <person name="Churcher L.J.C."/>
            <person name="Mungall K."/>
            <person name="Atkin R."/>
            <person name="Bason N."/>
            <person name="Brooks K."/>
            <person name="Chillingworth T."/>
            <person name="Clark K."/>
            <person name="Doggett J."/>
            <person name="Fraser A."/>
            <person name="Hance Z."/>
            <person name="Hauser H."/>
            <person name="Jagels K."/>
            <person name="Moule S."/>
            <person name="Norbertczak H."/>
            <person name="Ormond D."/>
            <person name="Price C."/>
            <person name="Quail M.A."/>
            <person name="Sanders M."/>
            <person name="Walker D."/>
            <person name="Whitehead S."/>
            <person name="Salmond G.P.C."/>
            <person name="Birch P.R.J."/>
            <person name="Parkhill J."/>
            <person name="Toth I.K."/>
        </authorList>
    </citation>
    <scope>NUCLEOTIDE SEQUENCE [LARGE SCALE GENOMIC DNA]</scope>
    <source>
        <strain>SCRI 1043 / ATCC BAA-672</strain>
    </source>
</reference>
<organism>
    <name type="scientific">Pectobacterium atrosepticum (strain SCRI 1043 / ATCC BAA-672)</name>
    <name type="common">Erwinia carotovora subsp. atroseptica</name>
    <dbReference type="NCBI Taxonomy" id="218491"/>
    <lineage>
        <taxon>Bacteria</taxon>
        <taxon>Pseudomonadati</taxon>
        <taxon>Pseudomonadota</taxon>
        <taxon>Gammaproteobacteria</taxon>
        <taxon>Enterobacterales</taxon>
        <taxon>Pectobacteriaceae</taxon>
        <taxon>Pectobacterium</taxon>
    </lineage>
</organism>